<accession>B0Z4V5</accession>
<keyword id="KW-0007">Acetylation</keyword>
<keyword id="KW-0148">Chlorophyll</keyword>
<keyword id="KW-0150">Chloroplast</keyword>
<keyword id="KW-0157">Chromophore</keyword>
<keyword id="KW-0464">Manganese</keyword>
<keyword id="KW-0472">Membrane</keyword>
<keyword id="KW-0479">Metal-binding</keyword>
<keyword id="KW-0597">Phosphoprotein</keyword>
<keyword id="KW-0602">Photosynthesis</keyword>
<keyword id="KW-0604">Photosystem II</keyword>
<keyword id="KW-0934">Plastid</keyword>
<keyword id="KW-0793">Thylakoid</keyword>
<keyword id="KW-0812">Transmembrane</keyword>
<keyword id="KW-1133">Transmembrane helix</keyword>
<comment type="function">
    <text evidence="1">One of the components of the core complex of photosystem II (PSII). It binds chlorophyll and helps catalyze the primary light-induced photochemical processes of PSII. PSII is a light-driven water:plastoquinone oxidoreductase, using light energy to abstract electrons from H(2)O, generating O(2) and a proton gradient subsequently used for ATP formation.</text>
</comment>
<comment type="cofactor">
    <text evidence="1">Binds multiple chlorophylls and provides some of the ligands for the Ca-4Mn-5O cluster of the oxygen-evolving complex. It may also provide a ligand for a Cl- that is required for oxygen evolution. PSII binds additional chlorophylls, carotenoids and specific lipids.</text>
</comment>
<comment type="subunit">
    <text evidence="1">PSII is composed of 1 copy each of membrane proteins PsbA, PsbB, PsbC, PsbD, PsbE, PsbF, PsbH, PsbI, PsbJ, PsbK, PsbL, PsbM, PsbT, PsbX, PsbY, PsbZ, Psb30/Ycf12, at least 3 peripheral proteins of the oxygen-evolving complex and a large number of cofactors. It forms dimeric complexes.</text>
</comment>
<comment type="subcellular location">
    <subcellularLocation>
        <location evidence="1">Plastid</location>
        <location evidence="1">Chloroplast thylakoid membrane</location>
        <topology evidence="1">Multi-pass membrane protein</topology>
    </subcellularLocation>
</comment>
<comment type="similarity">
    <text evidence="1">Belongs to the PsbB/PsbC family. PsbC subfamily.</text>
</comment>
<geneLocation type="chloroplast"/>
<gene>
    <name evidence="1" type="primary">psbC</name>
</gene>
<protein>
    <recommendedName>
        <fullName evidence="1">Photosystem II CP43 reaction center protein</fullName>
    </recommendedName>
    <alternativeName>
        <fullName evidence="1">PSII 43 kDa protein</fullName>
    </alternativeName>
    <alternativeName>
        <fullName evidence="1">Protein CP-43</fullName>
    </alternativeName>
</protein>
<name>PSBC_OENBI</name>
<dbReference type="EMBL" id="EU262889">
    <property type="protein sequence ID" value="ABW98867.1"/>
    <property type="molecule type" value="Genomic_DNA"/>
</dbReference>
<dbReference type="RefSeq" id="YP_001687362.1">
    <property type="nucleotide sequence ID" value="NC_010361.1"/>
</dbReference>
<dbReference type="SMR" id="B0Z4V5"/>
<dbReference type="GeneID" id="5951962"/>
<dbReference type="GO" id="GO:0009535">
    <property type="term" value="C:chloroplast thylakoid membrane"/>
    <property type="evidence" value="ECO:0007669"/>
    <property type="project" value="UniProtKB-SubCell"/>
</dbReference>
<dbReference type="GO" id="GO:0009523">
    <property type="term" value="C:photosystem II"/>
    <property type="evidence" value="ECO:0007669"/>
    <property type="project" value="UniProtKB-KW"/>
</dbReference>
<dbReference type="GO" id="GO:0016168">
    <property type="term" value="F:chlorophyll binding"/>
    <property type="evidence" value="ECO:0007669"/>
    <property type="project" value="UniProtKB-UniRule"/>
</dbReference>
<dbReference type="GO" id="GO:0045156">
    <property type="term" value="F:electron transporter, transferring electrons within the cyclic electron transport pathway of photosynthesis activity"/>
    <property type="evidence" value="ECO:0007669"/>
    <property type="project" value="InterPro"/>
</dbReference>
<dbReference type="GO" id="GO:0046872">
    <property type="term" value="F:metal ion binding"/>
    <property type="evidence" value="ECO:0007669"/>
    <property type="project" value="UniProtKB-KW"/>
</dbReference>
<dbReference type="GO" id="GO:0009772">
    <property type="term" value="P:photosynthetic electron transport in photosystem II"/>
    <property type="evidence" value="ECO:0007669"/>
    <property type="project" value="InterPro"/>
</dbReference>
<dbReference type="FunFam" id="1.10.10.670:FF:000001">
    <property type="entry name" value="Photosystem II CP43 reaction center protein"/>
    <property type="match status" value="1"/>
</dbReference>
<dbReference type="Gene3D" id="1.10.10.670">
    <property type="entry name" value="photosystem ii from thermosynechococcus elongatus"/>
    <property type="match status" value="1"/>
</dbReference>
<dbReference type="HAMAP" id="MF_01496">
    <property type="entry name" value="PSII_PsbC_CP43"/>
    <property type="match status" value="1"/>
</dbReference>
<dbReference type="InterPro" id="IPR000932">
    <property type="entry name" value="PS_antenna-like"/>
</dbReference>
<dbReference type="InterPro" id="IPR036001">
    <property type="entry name" value="PS_II_antenna-like_sf"/>
</dbReference>
<dbReference type="InterPro" id="IPR005869">
    <property type="entry name" value="PSII_PsbC"/>
</dbReference>
<dbReference type="InterPro" id="IPR044900">
    <property type="entry name" value="PSII_PsbC_sf"/>
</dbReference>
<dbReference type="NCBIfam" id="TIGR01153">
    <property type="entry name" value="psbC"/>
    <property type="match status" value="1"/>
</dbReference>
<dbReference type="Pfam" id="PF00421">
    <property type="entry name" value="PSII"/>
    <property type="match status" value="1"/>
</dbReference>
<dbReference type="SUPFAM" id="SSF161077">
    <property type="entry name" value="Photosystem II antenna protein-like"/>
    <property type="match status" value="1"/>
</dbReference>
<proteinExistence type="inferred from homology"/>
<sequence>MKTLYSLRRFYPVETLFNGTLALAGRDQETTGFAWWAGNARLINLSGKLLGAHVAHAGLIVFWAGAMNLFEVAHFVPEKPMYEQGLILLPHLATLGWGVGPGGEVIDTFPYFVSGVLHLISSAVLGFGGIYHALLGPETLEESFPFFGYVWKDRNKMTTILGIHLILLGLGAFLLVFKALYFGGVYDTWAPGGGDVRKITNLTLSPSILFGYLLKSPFGGEGWIVSVDDLEDIIGGHVWLGSICILGGIWHILTKPFAWARRALVWSGEAYLSYSLAALSVFGFIACCFVWFNNTAYPSEFYGPTGPEASQAQAFTFLVRDQRLGANVGSAQGPTGLGKYLMRSPTGEVIFGGETMRFWDLRAPWLEPLRGPNGLDLSRLKKDIQPWQERRSAEYMTHAPLGSLNSVGGVATEINAVNYVSPRSWLATSHFVLGFFLFVGHLWHAGRARAAAAGFEKGIDRDFEPALSMTPLN</sequence>
<feature type="propeptide" id="PRO_0000431178" evidence="1">
    <location>
        <begin position="1"/>
        <end position="14"/>
    </location>
</feature>
<feature type="chain" id="PRO_0000361444" description="Photosystem II CP43 reaction center protein" evidence="1">
    <location>
        <begin position="15"/>
        <end position="473"/>
    </location>
</feature>
<feature type="transmembrane region" description="Helical" evidence="1">
    <location>
        <begin position="69"/>
        <end position="93"/>
    </location>
</feature>
<feature type="transmembrane region" description="Helical" evidence="1">
    <location>
        <begin position="134"/>
        <end position="155"/>
    </location>
</feature>
<feature type="transmembrane region" description="Helical" evidence="1">
    <location>
        <begin position="178"/>
        <end position="200"/>
    </location>
</feature>
<feature type="transmembrane region" description="Helical" evidence="1">
    <location>
        <begin position="255"/>
        <end position="275"/>
    </location>
</feature>
<feature type="transmembrane region" description="Helical" evidence="1">
    <location>
        <begin position="291"/>
        <end position="312"/>
    </location>
</feature>
<feature type="transmembrane region" description="Helical" evidence="1">
    <location>
        <begin position="447"/>
        <end position="471"/>
    </location>
</feature>
<feature type="binding site" evidence="1">
    <location>
        <position position="367"/>
    </location>
    <ligand>
        <name>[CaMn4O5] cluster</name>
        <dbReference type="ChEBI" id="CHEBI:189552"/>
    </ligand>
</feature>
<feature type="modified residue" description="N-acetylthreonine" evidence="1">
    <location>
        <position position="15"/>
    </location>
</feature>
<feature type="modified residue" description="Phosphothreonine" evidence="1">
    <location>
        <position position="15"/>
    </location>
</feature>
<organism>
    <name type="scientific">Oenothera biennis</name>
    <name type="common">German evening primrose</name>
    <name type="synonym">Onagra biennis</name>
    <dbReference type="NCBI Taxonomy" id="3942"/>
    <lineage>
        <taxon>Eukaryota</taxon>
        <taxon>Viridiplantae</taxon>
        <taxon>Streptophyta</taxon>
        <taxon>Embryophyta</taxon>
        <taxon>Tracheophyta</taxon>
        <taxon>Spermatophyta</taxon>
        <taxon>Magnoliopsida</taxon>
        <taxon>eudicotyledons</taxon>
        <taxon>Gunneridae</taxon>
        <taxon>Pentapetalae</taxon>
        <taxon>rosids</taxon>
        <taxon>malvids</taxon>
        <taxon>Myrtales</taxon>
        <taxon>Onagraceae</taxon>
        <taxon>Onagroideae</taxon>
        <taxon>Onagreae</taxon>
        <taxon>Oenothera</taxon>
    </lineage>
</organism>
<reference key="1">
    <citation type="journal article" date="2008" name="Nucleic Acids Res.">
        <title>The complete nucleotide sequences of the five genetically distinct plastid genomes of Oenothera, subsection Oenothera: I. Sequence evaluation and plastome evolution.</title>
        <authorList>
            <person name="Greiner S."/>
            <person name="Wang X."/>
            <person name="Rauwolf U."/>
            <person name="Silber M.V."/>
            <person name="Mayer K."/>
            <person name="Meurer J."/>
            <person name="Haberer G."/>
            <person name="Herrmann R.G."/>
        </authorList>
    </citation>
    <scope>NUCLEOTIDE SEQUENCE [LARGE SCALE GENOMIC DNA]</scope>
    <source>
        <strain>cv. Suaveolens Grado</strain>
    </source>
</reference>
<evidence type="ECO:0000255" key="1">
    <source>
        <dbReference type="HAMAP-Rule" id="MF_01496"/>
    </source>
</evidence>